<comment type="function">
    <text evidence="1">ATP-dependent DNA 3'-5' helicase required for initiation of viral DNA replication. It forms a complex with the viral E2 protein. The E1-E2 complex binds to the replication origin which contains binding sites for both proteins. During the initial step, a dimer of E1 interacts with a dimer of protein E2 leading to a complex that binds the viral origin of replication with high specificity. Then, a second dimer of E1 displaces the E2 dimer in an ATP-dependent manner to form the E1 tetramer. Following this, two E1 monomers are added to each half of the site, which results in the formation of two E1 trimers on the viral ori. Subsequently, two hexamers will be created. The double hexamer acts as a bi-directional helicase machinery and unwinds the viral DNA and then recruits the host DNA polymerase to start replication.</text>
</comment>
<comment type="catalytic activity">
    <reaction evidence="1">
        <text>Couples ATP hydrolysis with the unwinding of duplex DNA by translocating in the 3'-5' direction.</text>
        <dbReference type="EC" id="5.6.2.4"/>
    </reaction>
</comment>
<comment type="catalytic activity">
    <reaction evidence="1">
        <text>ATP + H2O = ADP + phosphate + H(+)</text>
        <dbReference type="Rhea" id="RHEA:13065"/>
        <dbReference type="ChEBI" id="CHEBI:15377"/>
        <dbReference type="ChEBI" id="CHEBI:15378"/>
        <dbReference type="ChEBI" id="CHEBI:30616"/>
        <dbReference type="ChEBI" id="CHEBI:43474"/>
        <dbReference type="ChEBI" id="CHEBI:456216"/>
        <dbReference type="EC" id="5.6.2.4"/>
    </reaction>
</comment>
<comment type="subunit">
    <text evidence="1">Can form hexamers. Interacts with E2 protein; this interaction increases E1 DNA binding specificity. Interacts with host DNA polymerase subunit POLA2. Interacts with host single stranded DNA-binding protein RPA1. Interacts with host TOP1; this interaction stimulates the enzymatic activity of TOP1.</text>
</comment>
<comment type="subcellular location">
    <subcellularLocation>
        <location evidence="1">Host nucleus</location>
    </subcellularLocation>
</comment>
<comment type="PTM">
    <text evidence="1">Phosphorylated.</text>
</comment>
<comment type="PTM">
    <text evidence="1">Sumoylated.</text>
</comment>
<comment type="similarity">
    <text evidence="1">Belongs to the papillomaviridae E1 protein family.</text>
</comment>
<feature type="chain" id="PRO_0000133154" description="Replication protein E1">
    <location>
        <begin position="1"/>
        <end position="652"/>
    </location>
</feature>
<feature type="domain" description="SF3 helicase" evidence="1">
    <location>
        <begin position="450"/>
        <end position="600"/>
    </location>
</feature>
<feature type="region of interest" description="Disordered" evidence="2">
    <location>
        <begin position="145"/>
        <end position="185"/>
    </location>
</feature>
<feature type="region of interest" description="DNA-binding region" evidence="1">
    <location>
        <begin position="185"/>
        <end position="351"/>
    </location>
</feature>
<feature type="region of interest" description="Disordered" evidence="2">
    <location>
        <begin position="620"/>
        <end position="652"/>
    </location>
</feature>
<feature type="short sequence motif" description="Nuclear localization signal" evidence="1">
    <location>
        <begin position="88"/>
        <end position="90"/>
    </location>
</feature>
<feature type="short sequence motif" description="Nuclear export signal" evidence="1">
    <location>
        <begin position="108"/>
        <end position="117"/>
    </location>
</feature>
<feature type="compositionally biased region" description="Acidic residues" evidence="2">
    <location>
        <begin position="623"/>
        <end position="635"/>
    </location>
</feature>
<feature type="binding site" evidence="1">
    <location>
        <begin position="476"/>
        <end position="483"/>
    </location>
    <ligand>
        <name>ATP</name>
        <dbReference type="ChEBI" id="CHEBI:30616"/>
    </ligand>
</feature>
<feature type="modified residue" description="Phosphoserine; by host" evidence="1">
    <location>
        <position position="94"/>
    </location>
</feature>
<feature type="modified residue" description="Phosphoserine; by host" evidence="1">
    <location>
        <position position="98"/>
    </location>
</feature>
<feature type="modified residue" description="Phosphoserine; by host" evidence="1">
    <location>
        <position position="109"/>
    </location>
</feature>
<feature type="cross-link" description="Glycyl lysine isopeptide (Lys-Gly) (interchain with G-Cter in SUMO)" evidence="1">
    <location>
        <position position="557"/>
    </location>
</feature>
<evidence type="ECO:0000255" key="1">
    <source>
        <dbReference type="HAMAP-Rule" id="MF_04000"/>
    </source>
</evidence>
<evidence type="ECO:0000256" key="2">
    <source>
        <dbReference type="SAM" id="MobiDB-lite"/>
    </source>
</evidence>
<dbReference type="EC" id="5.6.2.4" evidence="1"/>
<dbReference type="EMBL" id="U31793">
    <property type="protein sequence ID" value="AAA79494.1"/>
    <property type="molecule type" value="Genomic_DNA"/>
</dbReference>
<dbReference type="RefSeq" id="NP_043446.1">
    <property type="nucleotide sequence ID" value="NC_001694.1"/>
</dbReference>
<dbReference type="SMR" id="Q80950"/>
<dbReference type="GeneID" id="1403314"/>
<dbReference type="KEGG" id="vg:1403314"/>
<dbReference type="Proteomes" id="UP000007670">
    <property type="component" value="Genome"/>
</dbReference>
<dbReference type="GO" id="GO:0042025">
    <property type="term" value="C:host cell nucleus"/>
    <property type="evidence" value="ECO:0007669"/>
    <property type="project" value="UniProtKB-SubCell"/>
</dbReference>
<dbReference type="GO" id="GO:0005524">
    <property type="term" value="F:ATP binding"/>
    <property type="evidence" value="ECO:0007669"/>
    <property type="project" value="UniProtKB-UniRule"/>
</dbReference>
<dbReference type="GO" id="GO:0016887">
    <property type="term" value="F:ATP hydrolysis activity"/>
    <property type="evidence" value="ECO:0007669"/>
    <property type="project" value="RHEA"/>
</dbReference>
<dbReference type="GO" id="GO:0003677">
    <property type="term" value="F:DNA binding"/>
    <property type="evidence" value="ECO:0007669"/>
    <property type="project" value="UniProtKB-UniRule"/>
</dbReference>
<dbReference type="GO" id="GO:0003678">
    <property type="term" value="F:DNA helicase activity"/>
    <property type="evidence" value="ECO:0007669"/>
    <property type="project" value="UniProtKB-UniRule"/>
</dbReference>
<dbReference type="GO" id="GO:0006260">
    <property type="term" value="P:DNA replication"/>
    <property type="evidence" value="ECO:0007669"/>
    <property type="project" value="UniProtKB-UniRule"/>
</dbReference>
<dbReference type="Gene3D" id="3.40.1310.10">
    <property type="match status" value="1"/>
</dbReference>
<dbReference type="Gene3D" id="3.40.50.300">
    <property type="entry name" value="P-loop containing nucleotide triphosphate hydrolases"/>
    <property type="match status" value="1"/>
</dbReference>
<dbReference type="Gene3D" id="1.10.10.510">
    <property type="entry name" value="Zinc finger, large T-antigen D1 domain"/>
    <property type="match status" value="1"/>
</dbReference>
<dbReference type="HAMAP" id="MF_04000">
    <property type="entry name" value="PPV_E1"/>
    <property type="match status" value="1"/>
</dbReference>
<dbReference type="InterPro" id="IPR014015">
    <property type="entry name" value="Helicase_SF3_DNA-vir"/>
</dbReference>
<dbReference type="InterPro" id="IPR027417">
    <property type="entry name" value="P-loop_NTPase"/>
</dbReference>
<dbReference type="InterPro" id="IPR001177">
    <property type="entry name" value="PPV_DNA_helicase_E1_C"/>
</dbReference>
<dbReference type="InterPro" id="IPR014000">
    <property type="entry name" value="PPV_DNA_helicase_E1_N"/>
</dbReference>
<dbReference type="InterPro" id="IPR046832">
    <property type="entry name" value="PPV_E1_DBD"/>
</dbReference>
<dbReference type="InterPro" id="IPR046935">
    <property type="entry name" value="PPV_E1_DBD_sf"/>
</dbReference>
<dbReference type="InterPro" id="IPR016393">
    <property type="entry name" value="Rep_E1_papillomaV"/>
</dbReference>
<dbReference type="InterPro" id="IPR037102">
    <property type="entry name" value="Znf_lg_T-Ag_D1_dom_sf"/>
</dbReference>
<dbReference type="Pfam" id="PF00519">
    <property type="entry name" value="PPV_E1_C"/>
    <property type="match status" value="1"/>
</dbReference>
<dbReference type="Pfam" id="PF20450">
    <property type="entry name" value="PPV_E1_DBD"/>
    <property type="match status" value="1"/>
</dbReference>
<dbReference type="Pfam" id="PF00524">
    <property type="entry name" value="PPV_E1_N"/>
    <property type="match status" value="1"/>
</dbReference>
<dbReference type="PIRSF" id="PIRSF003383">
    <property type="entry name" value="Rep_E1_papillomaV"/>
    <property type="match status" value="1"/>
</dbReference>
<dbReference type="SUPFAM" id="SSF55464">
    <property type="entry name" value="Origin of replication-binding domain, RBD-like"/>
    <property type="match status" value="1"/>
</dbReference>
<dbReference type="SUPFAM" id="SSF52540">
    <property type="entry name" value="P-loop containing nucleoside triphosphate hydrolases"/>
    <property type="match status" value="1"/>
</dbReference>
<dbReference type="PROSITE" id="PS51206">
    <property type="entry name" value="SF3_HELICASE_1"/>
    <property type="match status" value="1"/>
</dbReference>
<reference key="1">
    <citation type="submission" date="1995-10" db="EMBL/GenBank/DDBJ databases">
        <authorList>
            <person name="Delius H."/>
        </authorList>
    </citation>
    <scope>NUCLEOTIDE SEQUENCE [GENOMIC DNA]</scope>
</reference>
<organism>
    <name type="scientific">Human papillomavirus type 61</name>
    <dbReference type="NCBI Taxonomy" id="37116"/>
    <lineage>
        <taxon>Viruses</taxon>
        <taxon>Monodnaviria</taxon>
        <taxon>Shotokuvirae</taxon>
        <taxon>Cossaviricota</taxon>
        <taxon>Papovaviricetes</taxon>
        <taxon>Zurhausenvirales</taxon>
        <taxon>Papillomaviridae</taxon>
        <taxon>Firstpapillomavirinae</taxon>
        <taxon>Alphapapillomavirus</taxon>
        <taxon>Alphapapillomavirus 3</taxon>
    </lineage>
</organism>
<gene>
    <name evidence="1" type="primary">E1</name>
</gene>
<keyword id="KW-0067">ATP-binding</keyword>
<keyword id="KW-0235">DNA replication</keyword>
<keyword id="KW-0238">DNA-binding</keyword>
<keyword id="KW-0244">Early protein</keyword>
<keyword id="KW-0347">Helicase</keyword>
<keyword id="KW-1048">Host nucleus</keyword>
<keyword id="KW-0378">Hydrolase</keyword>
<keyword id="KW-0413">Isomerase</keyword>
<keyword id="KW-1017">Isopeptide bond</keyword>
<keyword id="KW-0547">Nucleotide-binding</keyword>
<keyword id="KW-0597">Phosphoprotein</keyword>
<keyword id="KW-1185">Reference proteome</keyword>
<keyword id="KW-0832">Ubl conjugation</keyword>
<name>VE1_HPV61</name>
<sequence length="652" mass="73065">MADSEGTESGDGTEAAERAGGWFLVEAVVDRTTGYQVSSDEEDNSIDTGEDLVDFIDTRRPGDGQEVPLALFVQQNAQDDAATVQALKRKYTCSPASSTCVSLVDSELSPRLDAIRIHRGQDRARRRLFEQDSGYGHTQVEIGASESQVPGDAQHEGGGESVQEAEEERGGGDGEAEATGNQETQAQEQAADILEVFKVSNLKAKLLYKFKDLFGLAFGELVRNFKSDKSICGDWVICAFGVYHAVAEAVKTLIQPICVYAHIQIQTCQWGMVILMLVRYKCGKSRETVAHSMGKLLNIPERQMLIEPPKIRSAPCALYWYRTAMGNASEVYGETPEWIVRQTVVGHAMQEAQFSLSMLVQWAYDNDITDESVLAYEYALLGNEDPNAAAFLASNCQAKYIKDAITMCKHYRRAEQAKMTMAQWITHRGRKVADTGDWKAIVKYLRYQQVEFVPFISALKLFLKGVPKKSCMVFYGPSDTGKSLFCMSLLNFLGGAVISYVNSSSHFWLSPLADTKVGLLDDATYQCWQYIDTYLRTVLDGNAISIDRKHRNLTQLKCPPLMITTNINPLEDPTFKYLHSRIVVFQFLHKCPLNSNGDPVYTLNNENWKSFFRRSWARIEGSDQQEEEEEEDEDGVTSRPFRCVPGEITRPL</sequence>
<organismHost>
    <name type="scientific">Homo sapiens</name>
    <name type="common">Human</name>
    <dbReference type="NCBI Taxonomy" id="9606"/>
</organismHost>
<protein>
    <recommendedName>
        <fullName evidence="1">Replication protein E1</fullName>
        <ecNumber evidence="1">5.6.2.4</ecNumber>
    </recommendedName>
    <alternativeName>
        <fullName evidence="1">ATP-dependent helicase E1</fullName>
    </alternativeName>
    <alternativeName>
        <fullName evidence="1">DNA 3'-5' helicase E1</fullName>
    </alternativeName>
</protein>
<accession>Q80950</accession>
<proteinExistence type="inferred from homology"/>